<gene>
    <name type="ordered locus">Memar_1614</name>
</gene>
<proteinExistence type="inferred from homology"/>
<reference key="1">
    <citation type="journal article" date="2009" name="Stand. Genomic Sci.">
        <title>Complete genome sequence of Methanoculleus marisnigri Romesser et al. 1981 type strain JR1.</title>
        <authorList>
            <person name="Anderson I.J."/>
            <person name="Sieprawska-Lupa M."/>
            <person name="Lapidus A."/>
            <person name="Nolan M."/>
            <person name="Copeland A."/>
            <person name="Glavina Del Rio T."/>
            <person name="Tice H."/>
            <person name="Dalin E."/>
            <person name="Barry K."/>
            <person name="Saunders E."/>
            <person name="Han C."/>
            <person name="Brettin T."/>
            <person name="Detter J.C."/>
            <person name="Bruce D."/>
            <person name="Mikhailova N."/>
            <person name="Pitluck S."/>
            <person name="Hauser L."/>
            <person name="Land M."/>
            <person name="Lucas S."/>
            <person name="Richardson P."/>
            <person name="Whitman W.B."/>
            <person name="Kyrpides N.C."/>
        </authorList>
    </citation>
    <scope>NUCLEOTIDE SEQUENCE [LARGE SCALE GENOMIC DNA]</scope>
    <source>
        <strain>ATCC 35101 / DSM 1498 / JR1</strain>
    </source>
</reference>
<accession>A3CVZ3</accession>
<feature type="chain" id="PRO_0000359455" description="O-phospho-L-seryl-tRNA:Cys-tRNA synthase">
    <location>
        <begin position="1"/>
        <end position="392"/>
    </location>
</feature>
<feature type="binding site" evidence="1">
    <location>
        <begin position="85"/>
        <end position="86"/>
    </location>
    <ligand>
        <name>pyridoxal 5'-phosphate</name>
        <dbReference type="ChEBI" id="CHEBI:597326"/>
    </ligand>
</feature>
<feature type="binding site" evidence="1">
    <location>
        <position position="190"/>
    </location>
    <ligand>
        <name>pyridoxal 5'-phosphate</name>
        <dbReference type="ChEBI" id="CHEBI:597326"/>
    </ligand>
</feature>
<feature type="binding site" evidence="1">
    <location>
        <begin position="213"/>
        <end position="215"/>
    </location>
    <ligand>
        <name>pyridoxal 5'-phosphate</name>
        <dbReference type="ChEBI" id="CHEBI:597326"/>
    </ligand>
</feature>
<feature type="modified residue" description="N6-(pyridoxal phosphate)lysine" evidence="1">
    <location>
        <position position="216"/>
    </location>
</feature>
<dbReference type="EC" id="2.5.1.73" evidence="1"/>
<dbReference type="EMBL" id="CP000562">
    <property type="protein sequence ID" value="ABN57543.1"/>
    <property type="molecule type" value="Genomic_DNA"/>
</dbReference>
<dbReference type="RefSeq" id="WP_011844454.1">
    <property type="nucleotide sequence ID" value="NC_009051.1"/>
</dbReference>
<dbReference type="SMR" id="A3CVZ3"/>
<dbReference type="STRING" id="368407.Memar_1614"/>
<dbReference type="GeneID" id="4848208"/>
<dbReference type="KEGG" id="mem:Memar_1614"/>
<dbReference type="eggNOG" id="arCOG00091">
    <property type="taxonomic scope" value="Archaea"/>
</dbReference>
<dbReference type="HOGENOM" id="CLU_060476_0_0_2"/>
<dbReference type="OrthoDB" id="5817at2157"/>
<dbReference type="Proteomes" id="UP000002146">
    <property type="component" value="Chromosome"/>
</dbReference>
<dbReference type="GO" id="GO:0043766">
    <property type="term" value="F:Sep-tRNA:Cys-tRNA synthase activity"/>
    <property type="evidence" value="ECO:0007669"/>
    <property type="project" value="UniProtKB-UniRule"/>
</dbReference>
<dbReference type="GO" id="GO:0006412">
    <property type="term" value="P:translation"/>
    <property type="evidence" value="ECO:0007669"/>
    <property type="project" value="UniProtKB-KW"/>
</dbReference>
<dbReference type="CDD" id="cd06452">
    <property type="entry name" value="SepCysS"/>
    <property type="match status" value="1"/>
</dbReference>
<dbReference type="Gene3D" id="3.90.1150.10">
    <property type="entry name" value="Aspartate Aminotransferase, domain 1"/>
    <property type="match status" value="1"/>
</dbReference>
<dbReference type="Gene3D" id="3.40.640.10">
    <property type="entry name" value="Type I PLP-dependent aspartate aminotransferase-like (Major domain)"/>
    <property type="match status" value="1"/>
</dbReference>
<dbReference type="HAMAP" id="MF_01675">
    <property type="entry name" value="Sep_Cys_tRNA_synth"/>
    <property type="match status" value="1"/>
</dbReference>
<dbReference type="InterPro" id="IPR000192">
    <property type="entry name" value="Aminotrans_V_dom"/>
</dbReference>
<dbReference type="InterPro" id="IPR015424">
    <property type="entry name" value="PyrdxlP-dep_Trfase"/>
</dbReference>
<dbReference type="InterPro" id="IPR015421">
    <property type="entry name" value="PyrdxlP-dep_Trfase_major"/>
</dbReference>
<dbReference type="InterPro" id="IPR015422">
    <property type="entry name" value="PyrdxlP-dep_Trfase_small"/>
</dbReference>
<dbReference type="InterPro" id="IPR013375">
    <property type="entry name" value="Sep_Cys-tRNA_synth_arc"/>
</dbReference>
<dbReference type="NCBIfam" id="NF006810">
    <property type="entry name" value="PRK09331.1"/>
    <property type="match status" value="1"/>
</dbReference>
<dbReference type="NCBIfam" id="TIGR02539">
    <property type="entry name" value="SepCysS"/>
    <property type="match status" value="1"/>
</dbReference>
<dbReference type="PANTHER" id="PTHR43586">
    <property type="entry name" value="CYSTEINE DESULFURASE"/>
    <property type="match status" value="1"/>
</dbReference>
<dbReference type="PANTHER" id="PTHR43586:SF3">
    <property type="entry name" value="O-PHOSPHO-L-SERYL-TRNA:CYS-TRNA SYNTHASE"/>
    <property type="match status" value="1"/>
</dbReference>
<dbReference type="Pfam" id="PF00266">
    <property type="entry name" value="Aminotran_5"/>
    <property type="match status" value="1"/>
</dbReference>
<dbReference type="SUPFAM" id="SSF53383">
    <property type="entry name" value="PLP-dependent transferases"/>
    <property type="match status" value="1"/>
</dbReference>
<keyword id="KW-0648">Protein biosynthesis</keyword>
<keyword id="KW-0663">Pyridoxal phosphate</keyword>
<keyword id="KW-0808">Transferase</keyword>
<evidence type="ECO:0000255" key="1">
    <source>
        <dbReference type="HAMAP-Rule" id="MF_01675"/>
    </source>
</evidence>
<comment type="function">
    <text evidence="1">Converts O-phospho-L-seryl-tRNA(Cys) (Sep-tRNA(Cys)) to L-cysteinyl-tRNA(Cys) (Cys-tRNA(Cys)).</text>
</comment>
<comment type="catalytic activity">
    <reaction evidence="1">
        <text>O-phospho-L-seryl-tRNA(Cys) + hydrogen sulfide + H(+) = L-cysteinyl-tRNA(Cys) + phosphate</text>
        <dbReference type="Rhea" id="RHEA:25686"/>
        <dbReference type="Rhea" id="RHEA-COMP:9679"/>
        <dbReference type="Rhea" id="RHEA-COMP:9719"/>
        <dbReference type="ChEBI" id="CHEBI:15378"/>
        <dbReference type="ChEBI" id="CHEBI:29919"/>
        <dbReference type="ChEBI" id="CHEBI:43474"/>
        <dbReference type="ChEBI" id="CHEBI:78517"/>
        <dbReference type="ChEBI" id="CHEBI:78551"/>
        <dbReference type="EC" id="2.5.1.73"/>
    </reaction>
</comment>
<comment type="cofactor">
    <cofactor evidence="1">
        <name>pyridoxal 5'-phosphate</name>
        <dbReference type="ChEBI" id="CHEBI:597326"/>
    </cofactor>
</comment>
<comment type="subunit">
    <text evidence="1">Homodimer. Interacts with SepRS.</text>
</comment>
<comment type="similarity">
    <text evidence="1">Belongs to the SepCysS family.</text>
</comment>
<sequence length="392" mass="42896">MKCAVDIESRDVEEMYINIDPIQAGGRLTVDAMKAAISFADGYSVCDNCRSPFRLDYIQKPPIAQFHADLAAWLNMDTARVVPGARRGFQAVASTYVEKGDPVIVTSLAHYTEFVAVEEAGGIPLEVPKDEKNHITPDAAAEKIEAVILEFSKTPPLLFIDHVDYQFGNVHDVAAITKVAHQYDIPVLVNGAYSVGIMPVDGKALGADFVVGSGHKSMAAPAPSGVLATTNEHAERVFRTTQAKGDVTGRTFGIKEVEMMGCTLMGVTVVGMMASFPHVKERVKHWDTEVAHSQAVVDALLSIEGTKVLSDYPRQHTLTRIDTRESFDKVAQQHKKRGFFLSSDLKKRGITGVIPGSTRVWKFNTFGLTEKQIRHVGESFVEIARENGLNIV</sequence>
<name>SPSS_METMJ</name>
<organism>
    <name type="scientific">Methanoculleus marisnigri (strain ATCC 35101 / DSM 1498 / JR1)</name>
    <dbReference type="NCBI Taxonomy" id="368407"/>
    <lineage>
        <taxon>Archaea</taxon>
        <taxon>Methanobacteriati</taxon>
        <taxon>Methanobacteriota</taxon>
        <taxon>Stenosarchaea group</taxon>
        <taxon>Methanomicrobia</taxon>
        <taxon>Methanomicrobiales</taxon>
        <taxon>Methanomicrobiaceae</taxon>
        <taxon>Methanoculleus</taxon>
    </lineage>
</organism>
<protein>
    <recommendedName>
        <fullName evidence="1">O-phospho-L-seryl-tRNA:Cys-tRNA synthase</fullName>
        <ecNumber evidence="1">2.5.1.73</ecNumber>
    </recommendedName>
    <alternativeName>
        <fullName evidence="1">Sep-tRNA:Cys-tRNA synthase</fullName>
        <shortName evidence="1">SepCysS</shortName>
    </alternativeName>
</protein>